<name>OGT_METVM</name>
<feature type="chain" id="PRO_0000417355" description="Methylated-DNA--protein-cysteine methyltransferase">
    <location>
        <begin position="1"/>
        <end position="161"/>
    </location>
</feature>
<feature type="active site" description="Nucleophile; methyl group acceptor" evidence="1">
    <location>
        <position position="128"/>
    </location>
</feature>
<evidence type="ECO:0000255" key="1">
    <source>
        <dbReference type="HAMAP-Rule" id="MF_00772"/>
    </source>
</evidence>
<sequence length="161" mass="18548">MIVQINDYFIGMIFKGNRLVRNTIPLREEEIFRFYNGKILDEPNKMCMKVGKIILKLYFADLDDKIARDLIDYELNVSSFTKKVLDEVKKIKFGETVSYGDIAKKLNTSPRAVGVALSKNPLPLIIPCHRVVAKNSLGGYSYGIEKKKFILEMEQIKKRLK</sequence>
<reference key="1">
    <citation type="submission" date="2009-10" db="EMBL/GenBank/DDBJ databases">
        <title>Complete sequence of chromosome of Methanocaldococcus vulcanius M7.</title>
        <authorList>
            <consortium name="US DOE Joint Genome Institute"/>
            <person name="Lucas S."/>
            <person name="Copeland A."/>
            <person name="Lapidus A."/>
            <person name="Glavina del Rio T."/>
            <person name="Dalin E."/>
            <person name="Tice H."/>
            <person name="Bruce D."/>
            <person name="Goodwin L."/>
            <person name="Pitluck S."/>
            <person name="Lcollab F.I."/>
            <person name="Brettin T."/>
            <person name="Detter J.C."/>
            <person name="Han C."/>
            <person name="Tapia R."/>
            <person name="Kuske C.R."/>
            <person name="Schmutz J."/>
            <person name="Larimer F."/>
            <person name="Land M."/>
            <person name="Hauser L."/>
            <person name="Kyrpides N."/>
            <person name="Ovchinikova G."/>
            <person name="Sieprawska-Lupa M."/>
            <person name="Whitman W.B."/>
            <person name="Woyke T."/>
        </authorList>
    </citation>
    <scope>NUCLEOTIDE SEQUENCE [LARGE SCALE GENOMIC DNA]</scope>
    <source>
        <strain>ATCC 700851 / DSM 12094 / M7</strain>
    </source>
</reference>
<comment type="function">
    <text evidence="1">Involved in the cellular defense against the biological effects of O6-methylguanine (O6-MeG) and O4-methylthymine (O4-MeT) in DNA. Repairs the methylated nucleobase in DNA by stoichiometrically transferring the methyl group to a cysteine residue in the enzyme. This is a suicide reaction: the enzyme is irreversibly inactivated.</text>
</comment>
<comment type="catalytic activity">
    <reaction evidence="1">
        <text>a 6-O-methyl-2'-deoxyguanosine in DNA + L-cysteinyl-[protein] = S-methyl-L-cysteinyl-[protein] + a 2'-deoxyguanosine in DNA</text>
        <dbReference type="Rhea" id="RHEA:24000"/>
        <dbReference type="Rhea" id="RHEA-COMP:10131"/>
        <dbReference type="Rhea" id="RHEA-COMP:10132"/>
        <dbReference type="Rhea" id="RHEA-COMP:11367"/>
        <dbReference type="Rhea" id="RHEA-COMP:11368"/>
        <dbReference type="ChEBI" id="CHEBI:29950"/>
        <dbReference type="ChEBI" id="CHEBI:82612"/>
        <dbReference type="ChEBI" id="CHEBI:85445"/>
        <dbReference type="ChEBI" id="CHEBI:85448"/>
        <dbReference type="EC" id="2.1.1.63"/>
    </reaction>
</comment>
<comment type="catalytic activity">
    <reaction evidence="1">
        <text>a 4-O-methyl-thymidine in DNA + L-cysteinyl-[protein] = a thymidine in DNA + S-methyl-L-cysteinyl-[protein]</text>
        <dbReference type="Rhea" id="RHEA:53428"/>
        <dbReference type="Rhea" id="RHEA-COMP:10131"/>
        <dbReference type="Rhea" id="RHEA-COMP:10132"/>
        <dbReference type="Rhea" id="RHEA-COMP:13555"/>
        <dbReference type="Rhea" id="RHEA-COMP:13556"/>
        <dbReference type="ChEBI" id="CHEBI:29950"/>
        <dbReference type="ChEBI" id="CHEBI:82612"/>
        <dbReference type="ChEBI" id="CHEBI:137386"/>
        <dbReference type="ChEBI" id="CHEBI:137387"/>
        <dbReference type="EC" id="2.1.1.63"/>
    </reaction>
</comment>
<comment type="subcellular location">
    <subcellularLocation>
        <location evidence="1">Cytoplasm</location>
    </subcellularLocation>
</comment>
<comment type="miscellaneous">
    <text>This enzyme catalyzes only one turnover and therefore is not strictly catalytic. According to one definition, an enzyme is a biocatalyst that acts repeatedly and over many reaction cycles.</text>
</comment>
<comment type="similarity">
    <text evidence="1">Belongs to the MGMT family.</text>
</comment>
<proteinExistence type="inferred from homology"/>
<dbReference type="EC" id="2.1.1.63" evidence="1"/>
<dbReference type="EMBL" id="CP001787">
    <property type="protein sequence ID" value="ACX73566.1"/>
    <property type="molecule type" value="Genomic_DNA"/>
</dbReference>
<dbReference type="RefSeq" id="WP_015733784.1">
    <property type="nucleotide sequence ID" value="NC_013407.1"/>
</dbReference>
<dbReference type="SMR" id="C9RE37"/>
<dbReference type="STRING" id="579137.Metvu_1714"/>
<dbReference type="GeneID" id="8514075"/>
<dbReference type="KEGG" id="mvu:Metvu_1714"/>
<dbReference type="eggNOG" id="arCOG02724">
    <property type="taxonomic scope" value="Archaea"/>
</dbReference>
<dbReference type="HOGENOM" id="CLU_000445_52_2_2"/>
<dbReference type="OrthoDB" id="372118at2157"/>
<dbReference type="Proteomes" id="UP000002063">
    <property type="component" value="Chromosome"/>
</dbReference>
<dbReference type="GO" id="GO:0005737">
    <property type="term" value="C:cytoplasm"/>
    <property type="evidence" value="ECO:0007669"/>
    <property type="project" value="UniProtKB-SubCell"/>
</dbReference>
<dbReference type="GO" id="GO:0003908">
    <property type="term" value="F:methylated-DNA-[protein]-cysteine S-methyltransferase activity"/>
    <property type="evidence" value="ECO:0007669"/>
    <property type="project" value="UniProtKB-UniRule"/>
</dbReference>
<dbReference type="GO" id="GO:0006307">
    <property type="term" value="P:DNA alkylation repair"/>
    <property type="evidence" value="ECO:0007669"/>
    <property type="project" value="UniProtKB-UniRule"/>
</dbReference>
<dbReference type="GO" id="GO:0032259">
    <property type="term" value="P:methylation"/>
    <property type="evidence" value="ECO:0007669"/>
    <property type="project" value="UniProtKB-KW"/>
</dbReference>
<dbReference type="CDD" id="cd06445">
    <property type="entry name" value="ATase"/>
    <property type="match status" value="1"/>
</dbReference>
<dbReference type="FunFam" id="1.10.10.10:FF:000787">
    <property type="entry name" value="Methylated-DNA--protein-cysteine methyltransferase"/>
    <property type="match status" value="1"/>
</dbReference>
<dbReference type="Gene3D" id="3.30.160.460">
    <property type="match status" value="1"/>
</dbReference>
<dbReference type="Gene3D" id="1.10.10.10">
    <property type="entry name" value="Winged helix-like DNA-binding domain superfamily/Winged helix DNA-binding domain"/>
    <property type="match status" value="1"/>
</dbReference>
<dbReference type="HAMAP" id="MF_00772">
    <property type="entry name" value="OGT"/>
    <property type="match status" value="1"/>
</dbReference>
<dbReference type="InterPro" id="IPR001497">
    <property type="entry name" value="MethylDNA_cys_MeTrfase_AS"/>
</dbReference>
<dbReference type="InterPro" id="IPR014048">
    <property type="entry name" value="MethylDNA_cys_MeTrfase_DNA-bd"/>
</dbReference>
<dbReference type="InterPro" id="IPR036217">
    <property type="entry name" value="MethylDNA_cys_MeTrfase_DNAb"/>
</dbReference>
<dbReference type="InterPro" id="IPR023546">
    <property type="entry name" value="MGMT"/>
</dbReference>
<dbReference type="InterPro" id="IPR055028">
    <property type="entry name" value="OGT_N"/>
</dbReference>
<dbReference type="InterPro" id="IPR036388">
    <property type="entry name" value="WH-like_DNA-bd_sf"/>
</dbReference>
<dbReference type="NCBIfam" id="TIGR00589">
    <property type="entry name" value="ogt"/>
    <property type="match status" value="1"/>
</dbReference>
<dbReference type="PANTHER" id="PTHR46460">
    <property type="entry name" value="METHYLATED-DNA--PROTEIN-CYSTEINE METHYLTRANSFERASE"/>
    <property type="match status" value="1"/>
</dbReference>
<dbReference type="PANTHER" id="PTHR46460:SF1">
    <property type="entry name" value="METHYLATED-DNA--PROTEIN-CYSTEINE METHYLTRANSFERASE"/>
    <property type="match status" value="1"/>
</dbReference>
<dbReference type="Pfam" id="PF01035">
    <property type="entry name" value="DNA_binding_1"/>
    <property type="match status" value="1"/>
</dbReference>
<dbReference type="Pfam" id="PF22413">
    <property type="entry name" value="OGT_N"/>
    <property type="match status" value="1"/>
</dbReference>
<dbReference type="SUPFAM" id="SSF46767">
    <property type="entry name" value="Methylated DNA-protein cysteine methyltransferase, C-terminal domain"/>
    <property type="match status" value="1"/>
</dbReference>
<dbReference type="PROSITE" id="PS00374">
    <property type="entry name" value="MGMT"/>
    <property type="match status" value="1"/>
</dbReference>
<protein>
    <recommendedName>
        <fullName evidence="1">Methylated-DNA--protein-cysteine methyltransferase</fullName>
        <ecNumber evidence="1">2.1.1.63</ecNumber>
    </recommendedName>
    <alternativeName>
        <fullName evidence="1">6-O-methylguanine-DNA methyltransferase</fullName>
        <shortName evidence="1">MGMT</shortName>
    </alternativeName>
    <alternativeName>
        <fullName evidence="1">O-6-methylguanine-DNA-alkyltransferase</fullName>
    </alternativeName>
</protein>
<gene>
    <name evidence="1" type="primary">ogt</name>
    <name type="ordered locus">Metvu_1714</name>
</gene>
<keyword id="KW-0963">Cytoplasm</keyword>
<keyword id="KW-0227">DNA damage</keyword>
<keyword id="KW-0234">DNA repair</keyword>
<keyword id="KW-0489">Methyltransferase</keyword>
<keyword id="KW-0808">Transferase</keyword>
<accession>C9RE37</accession>
<organism>
    <name type="scientific">Methanocaldococcus vulcanius (strain ATCC 700851 / DSM 12094 / M7)</name>
    <name type="common">Methanococcus vulcanius</name>
    <dbReference type="NCBI Taxonomy" id="579137"/>
    <lineage>
        <taxon>Archaea</taxon>
        <taxon>Methanobacteriati</taxon>
        <taxon>Methanobacteriota</taxon>
        <taxon>Methanomada group</taxon>
        <taxon>Methanococci</taxon>
        <taxon>Methanococcales</taxon>
        <taxon>Methanocaldococcaceae</taxon>
        <taxon>Methanocaldococcus</taxon>
    </lineage>
</organism>